<comment type="subcellular location">
    <subcellularLocation>
        <location evidence="4">Membrane</location>
        <topology evidence="4">Multi-pass membrane protein</topology>
    </subcellularLocation>
    <subcellularLocation>
        <location evidence="2">Cell projection</location>
        <location evidence="2">Cilium</location>
    </subcellularLocation>
    <text evidence="2">Localizes at the transition zone, a region between the basal body and the ciliary axoneme.</text>
</comment>
<comment type="alternative products">
    <event type="alternative splicing"/>
    <isoform>
        <id>Q9D3H0-1</id>
        <name>1</name>
        <sequence type="displayed"/>
    </isoform>
    <isoform>
        <id>Q9D3H0-2</id>
        <name>2</name>
        <sequence type="described" ref="VSP_025611"/>
    </isoform>
</comment>
<gene>
    <name type="primary">Tmem80</name>
</gene>
<name>TMM80_MOUSE</name>
<feature type="chain" id="PRO_0000287874" description="Transmembrane protein 80">
    <location>
        <begin position="1"/>
        <end position="123"/>
    </location>
</feature>
<feature type="transmembrane region" description="Helical" evidence="1">
    <location>
        <begin position="2"/>
        <end position="22"/>
    </location>
</feature>
<feature type="transmembrane region" description="Helical" evidence="1">
    <location>
        <begin position="35"/>
        <end position="55"/>
    </location>
</feature>
<feature type="transmembrane region" description="Helical" evidence="1">
    <location>
        <begin position="68"/>
        <end position="88"/>
    </location>
</feature>
<feature type="transmembrane region" description="Helical" evidence="1">
    <location>
        <begin position="102"/>
        <end position="122"/>
    </location>
</feature>
<feature type="splice variant" id="VSP_025611" description="In isoform 2." evidence="3">
    <location>
        <begin position="26"/>
        <end position="56"/>
    </location>
</feature>
<organism>
    <name type="scientific">Mus musculus</name>
    <name type="common">Mouse</name>
    <dbReference type="NCBI Taxonomy" id="10090"/>
    <lineage>
        <taxon>Eukaryota</taxon>
        <taxon>Metazoa</taxon>
        <taxon>Chordata</taxon>
        <taxon>Craniata</taxon>
        <taxon>Vertebrata</taxon>
        <taxon>Euteleostomi</taxon>
        <taxon>Mammalia</taxon>
        <taxon>Eutheria</taxon>
        <taxon>Euarchontoglires</taxon>
        <taxon>Glires</taxon>
        <taxon>Rodentia</taxon>
        <taxon>Myomorpha</taxon>
        <taxon>Muroidea</taxon>
        <taxon>Muridae</taxon>
        <taxon>Murinae</taxon>
        <taxon>Mus</taxon>
        <taxon>Mus</taxon>
    </lineage>
</organism>
<reference key="1">
    <citation type="journal article" date="2005" name="Science">
        <title>The transcriptional landscape of the mammalian genome.</title>
        <authorList>
            <person name="Carninci P."/>
            <person name="Kasukawa T."/>
            <person name="Katayama S."/>
            <person name="Gough J."/>
            <person name="Frith M.C."/>
            <person name="Maeda N."/>
            <person name="Oyama R."/>
            <person name="Ravasi T."/>
            <person name="Lenhard B."/>
            <person name="Wells C."/>
            <person name="Kodzius R."/>
            <person name="Shimokawa K."/>
            <person name="Bajic V.B."/>
            <person name="Brenner S.E."/>
            <person name="Batalov S."/>
            <person name="Forrest A.R."/>
            <person name="Zavolan M."/>
            <person name="Davis M.J."/>
            <person name="Wilming L.G."/>
            <person name="Aidinis V."/>
            <person name="Allen J.E."/>
            <person name="Ambesi-Impiombato A."/>
            <person name="Apweiler R."/>
            <person name="Aturaliya R.N."/>
            <person name="Bailey T.L."/>
            <person name="Bansal M."/>
            <person name="Baxter L."/>
            <person name="Beisel K.W."/>
            <person name="Bersano T."/>
            <person name="Bono H."/>
            <person name="Chalk A.M."/>
            <person name="Chiu K.P."/>
            <person name="Choudhary V."/>
            <person name="Christoffels A."/>
            <person name="Clutterbuck D.R."/>
            <person name="Crowe M.L."/>
            <person name="Dalla E."/>
            <person name="Dalrymple B.P."/>
            <person name="de Bono B."/>
            <person name="Della Gatta G."/>
            <person name="di Bernardo D."/>
            <person name="Down T."/>
            <person name="Engstrom P."/>
            <person name="Fagiolini M."/>
            <person name="Faulkner G."/>
            <person name="Fletcher C.F."/>
            <person name="Fukushima T."/>
            <person name="Furuno M."/>
            <person name="Futaki S."/>
            <person name="Gariboldi M."/>
            <person name="Georgii-Hemming P."/>
            <person name="Gingeras T.R."/>
            <person name="Gojobori T."/>
            <person name="Green R.E."/>
            <person name="Gustincich S."/>
            <person name="Harbers M."/>
            <person name="Hayashi Y."/>
            <person name="Hensch T.K."/>
            <person name="Hirokawa N."/>
            <person name="Hill D."/>
            <person name="Huminiecki L."/>
            <person name="Iacono M."/>
            <person name="Ikeo K."/>
            <person name="Iwama A."/>
            <person name="Ishikawa T."/>
            <person name="Jakt M."/>
            <person name="Kanapin A."/>
            <person name="Katoh M."/>
            <person name="Kawasawa Y."/>
            <person name="Kelso J."/>
            <person name="Kitamura H."/>
            <person name="Kitano H."/>
            <person name="Kollias G."/>
            <person name="Krishnan S.P."/>
            <person name="Kruger A."/>
            <person name="Kummerfeld S.K."/>
            <person name="Kurochkin I.V."/>
            <person name="Lareau L.F."/>
            <person name="Lazarevic D."/>
            <person name="Lipovich L."/>
            <person name="Liu J."/>
            <person name="Liuni S."/>
            <person name="McWilliam S."/>
            <person name="Madan Babu M."/>
            <person name="Madera M."/>
            <person name="Marchionni L."/>
            <person name="Matsuda H."/>
            <person name="Matsuzawa S."/>
            <person name="Miki H."/>
            <person name="Mignone F."/>
            <person name="Miyake S."/>
            <person name="Morris K."/>
            <person name="Mottagui-Tabar S."/>
            <person name="Mulder N."/>
            <person name="Nakano N."/>
            <person name="Nakauchi H."/>
            <person name="Ng P."/>
            <person name="Nilsson R."/>
            <person name="Nishiguchi S."/>
            <person name="Nishikawa S."/>
            <person name="Nori F."/>
            <person name="Ohara O."/>
            <person name="Okazaki Y."/>
            <person name="Orlando V."/>
            <person name="Pang K.C."/>
            <person name="Pavan W.J."/>
            <person name="Pavesi G."/>
            <person name="Pesole G."/>
            <person name="Petrovsky N."/>
            <person name="Piazza S."/>
            <person name="Reed J."/>
            <person name="Reid J.F."/>
            <person name="Ring B.Z."/>
            <person name="Ringwald M."/>
            <person name="Rost B."/>
            <person name="Ruan Y."/>
            <person name="Salzberg S.L."/>
            <person name="Sandelin A."/>
            <person name="Schneider C."/>
            <person name="Schoenbach C."/>
            <person name="Sekiguchi K."/>
            <person name="Semple C.A."/>
            <person name="Seno S."/>
            <person name="Sessa L."/>
            <person name="Sheng Y."/>
            <person name="Shibata Y."/>
            <person name="Shimada H."/>
            <person name="Shimada K."/>
            <person name="Silva D."/>
            <person name="Sinclair B."/>
            <person name="Sperling S."/>
            <person name="Stupka E."/>
            <person name="Sugiura K."/>
            <person name="Sultana R."/>
            <person name="Takenaka Y."/>
            <person name="Taki K."/>
            <person name="Tammoja K."/>
            <person name="Tan S.L."/>
            <person name="Tang S."/>
            <person name="Taylor M.S."/>
            <person name="Tegner J."/>
            <person name="Teichmann S.A."/>
            <person name="Ueda H.R."/>
            <person name="van Nimwegen E."/>
            <person name="Verardo R."/>
            <person name="Wei C.L."/>
            <person name="Yagi K."/>
            <person name="Yamanishi H."/>
            <person name="Zabarovsky E."/>
            <person name="Zhu S."/>
            <person name="Zimmer A."/>
            <person name="Hide W."/>
            <person name="Bult C."/>
            <person name="Grimmond S.M."/>
            <person name="Teasdale R.D."/>
            <person name="Liu E.T."/>
            <person name="Brusic V."/>
            <person name="Quackenbush J."/>
            <person name="Wahlestedt C."/>
            <person name="Mattick J.S."/>
            <person name="Hume D.A."/>
            <person name="Kai C."/>
            <person name="Sasaki D."/>
            <person name="Tomaru Y."/>
            <person name="Fukuda S."/>
            <person name="Kanamori-Katayama M."/>
            <person name="Suzuki M."/>
            <person name="Aoki J."/>
            <person name="Arakawa T."/>
            <person name="Iida J."/>
            <person name="Imamura K."/>
            <person name="Itoh M."/>
            <person name="Kato T."/>
            <person name="Kawaji H."/>
            <person name="Kawagashira N."/>
            <person name="Kawashima T."/>
            <person name="Kojima M."/>
            <person name="Kondo S."/>
            <person name="Konno H."/>
            <person name="Nakano K."/>
            <person name="Ninomiya N."/>
            <person name="Nishio T."/>
            <person name="Okada M."/>
            <person name="Plessy C."/>
            <person name="Shibata K."/>
            <person name="Shiraki T."/>
            <person name="Suzuki S."/>
            <person name="Tagami M."/>
            <person name="Waki K."/>
            <person name="Watahiki A."/>
            <person name="Okamura-Oho Y."/>
            <person name="Suzuki H."/>
            <person name="Kawai J."/>
            <person name="Hayashizaki Y."/>
        </authorList>
    </citation>
    <scope>NUCLEOTIDE SEQUENCE [LARGE SCALE MRNA] (ISOFORMS 1 AND 2)</scope>
    <source>
        <strain>C57BL/6J</strain>
        <tissue>Embryo</tissue>
        <tissue>Head</tissue>
        <tissue>Kidney</tissue>
        <tissue>Medulla oblongata</tissue>
    </source>
</reference>
<reference key="2">
    <citation type="journal article" date="2004" name="Genome Res.">
        <title>The status, quality, and expansion of the NIH full-length cDNA project: the Mammalian Gene Collection (MGC).</title>
        <authorList>
            <consortium name="The MGC Project Team"/>
        </authorList>
    </citation>
    <scope>NUCLEOTIDE SEQUENCE [LARGE SCALE MRNA] (ISOFORM 1)</scope>
    <source>
        <strain>FVB/N</strain>
        <tissue>Salivary gland</tissue>
    </source>
</reference>
<reference key="3">
    <citation type="journal article" date="2016" name="PLoS Biol.">
        <title>MKS5 and CEP290 dependent assembly pathway of the ciliary transition zone.</title>
        <authorList>
            <person name="Li C."/>
            <person name="Jensen V.L."/>
            <person name="Park K."/>
            <person name="Kennedy J."/>
            <person name="Garcia-Gonzalo F.R."/>
            <person name="Romani M."/>
            <person name="De Mori R."/>
            <person name="Bruel A.L."/>
            <person name="Gaillard D."/>
            <person name="Doray B."/>
            <person name="Lopez E."/>
            <person name="Riviere J.B."/>
            <person name="Faivre L."/>
            <person name="Thauvin-Robinet C."/>
            <person name="Reiter J.F."/>
            <person name="Blacque O.E."/>
            <person name="Valente E.M."/>
            <person name="Leroux M.R."/>
        </authorList>
    </citation>
    <scope>SUBCELLULAR LOCATION</scope>
</reference>
<keyword id="KW-0025">Alternative splicing</keyword>
<keyword id="KW-0966">Cell projection</keyword>
<keyword id="KW-0472">Membrane</keyword>
<keyword id="KW-1185">Reference proteome</keyword>
<keyword id="KW-0812">Transmembrane</keyword>
<keyword id="KW-1133">Transmembrane helix</keyword>
<protein>
    <recommendedName>
        <fullName>Transmembrane protein 80</fullName>
    </recommendedName>
</protein>
<dbReference type="EMBL" id="AK017460">
    <property type="protein sequence ID" value="BAB30753.1"/>
    <property type="molecule type" value="mRNA"/>
</dbReference>
<dbReference type="EMBL" id="AK049405">
    <property type="protein sequence ID" value="BAC33737.1"/>
    <property type="molecule type" value="mRNA"/>
</dbReference>
<dbReference type="EMBL" id="AK134821">
    <property type="protein sequence ID" value="BAE22300.1"/>
    <property type="molecule type" value="mRNA"/>
</dbReference>
<dbReference type="EMBL" id="AK169083">
    <property type="protein sequence ID" value="BAE40867.1"/>
    <property type="molecule type" value="mRNA"/>
</dbReference>
<dbReference type="EMBL" id="BC022756">
    <property type="protein sequence ID" value="AAH22756.1"/>
    <property type="molecule type" value="mRNA"/>
</dbReference>
<dbReference type="CCDS" id="CCDS22008.1">
    <molecule id="Q9D3H0-1"/>
</dbReference>
<dbReference type="RefSeq" id="NP_001135422.1">
    <molecule id="Q9D3H0-1"/>
    <property type="nucleotide sequence ID" value="NM_001141950.2"/>
</dbReference>
<dbReference type="RefSeq" id="NP_082073.1">
    <molecule id="Q9D3H0-1"/>
    <property type="nucleotide sequence ID" value="NM_027797.4"/>
</dbReference>
<dbReference type="RefSeq" id="XP_011248160.1">
    <molecule id="Q9D3H0-1"/>
    <property type="nucleotide sequence ID" value="XM_011249858.2"/>
</dbReference>
<dbReference type="RefSeq" id="XP_036009330.1">
    <molecule id="Q9D3H0-1"/>
    <property type="nucleotide sequence ID" value="XM_036153437.1"/>
</dbReference>
<dbReference type="SMR" id="Q9D3H0"/>
<dbReference type="FunCoup" id="Q9D3H0">
    <property type="interactions" value="66"/>
</dbReference>
<dbReference type="STRING" id="10090.ENSMUSP00000026578"/>
<dbReference type="PhosphoSitePlus" id="Q9D3H0"/>
<dbReference type="PaxDb" id="10090-ENSMUSP00000118223"/>
<dbReference type="Antibodypedia" id="59030">
    <property type="antibodies" value="127 antibodies from 14 providers"/>
</dbReference>
<dbReference type="DNASU" id="71448"/>
<dbReference type="Ensembl" id="ENSMUST00000026578.14">
    <molecule id="Q9D3H0-1"/>
    <property type="protein sequence ID" value="ENSMUSP00000026578.8"/>
    <property type="gene ID" value="ENSMUSG00000025505.17"/>
</dbReference>
<dbReference type="Ensembl" id="ENSMUST00000126510.8">
    <molecule id="Q9D3H0-1"/>
    <property type="protein sequence ID" value="ENSMUSP00000123330.2"/>
    <property type="gene ID" value="ENSMUSG00000025505.17"/>
</dbReference>
<dbReference type="Ensembl" id="ENSMUST00000128906.2">
    <molecule id="Q9D3H0-2"/>
    <property type="protein sequence ID" value="ENSMUSP00000117306.2"/>
    <property type="gene ID" value="ENSMUSG00000025505.17"/>
</dbReference>
<dbReference type="Ensembl" id="ENSMUST00000132061.2">
    <molecule id="Q9D3H0-1"/>
    <property type="protein sequence ID" value="ENSMUSP00000118223.2"/>
    <property type="gene ID" value="ENSMUSG00000025505.17"/>
</dbReference>
<dbReference type="Ensembl" id="ENSMUST00000133012.8">
    <molecule id="Q9D3H0-1"/>
    <property type="protein sequence ID" value="ENSMUSP00000116695.2"/>
    <property type="gene ID" value="ENSMUSG00000025505.17"/>
</dbReference>
<dbReference type="Ensembl" id="ENSMUST00000145184.8">
    <molecule id="Q9D3H0-2"/>
    <property type="protein sequence ID" value="ENSMUSP00000117633.2"/>
    <property type="gene ID" value="ENSMUSG00000025505.17"/>
</dbReference>
<dbReference type="GeneID" id="71448"/>
<dbReference type="KEGG" id="mmu:71448"/>
<dbReference type="UCSC" id="uc009kkq.2">
    <molecule id="Q9D3H0-1"/>
    <property type="organism name" value="mouse"/>
</dbReference>
<dbReference type="AGR" id="MGI:1918698"/>
<dbReference type="CTD" id="283232"/>
<dbReference type="MGI" id="MGI:1918698">
    <property type="gene designation" value="Tmem80"/>
</dbReference>
<dbReference type="VEuPathDB" id="HostDB:ENSMUSG00000025505"/>
<dbReference type="eggNOG" id="KOG4502">
    <property type="taxonomic scope" value="Eukaryota"/>
</dbReference>
<dbReference type="GeneTree" id="ENSGT00940000153899"/>
<dbReference type="HOGENOM" id="CLU_135948_0_0_1"/>
<dbReference type="InParanoid" id="Q9D3H0"/>
<dbReference type="OMA" id="LRIEYIW"/>
<dbReference type="OrthoDB" id="262535at2759"/>
<dbReference type="PhylomeDB" id="Q9D3H0"/>
<dbReference type="TreeFam" id="TF323824"/>
<dbReference type="BioGRID-ORCS" id="71448">
    <property type="hits" value="1 hit in 75 CRISPR screens"/>
</dbReference>
<dbReference type="PRO" id="PR:Q9D3H0"/>
<dbReference type="Proteomes" id="UP000000589">
    <property type="component" value="Chromosome 7"/>
</dbReference>
<dbReference type="RNAct" id="Q9D3H0">
    <property type="molecule type" value="protein"/>
</dbReference>
<dbReference type="Bgee" id="ENSMUSG00000025505">
    <property type="expression patterns" value="Expressed in humerus cartilage element and 241 other cell types or tissues"/>
</dbReference>
<dbReference type="GO" id="GO:0035869">
    <property type="term" value="C:ciliary transition zone"/>
    <property type="evidence" value="ECO:0000314"/>
    <property type="project" value="WormBase"/>
</dbReference>
<dbReference type="GO" id="GO:0016020">
    <property type="term" value="C:membrane"/>
    <property type="evidence" value="ECO:0007669"/>
    <property type="project" value="UniProtKB-SubCell"/>
</dbReference>
<dbReference type="InterPro" id="IPR019184">
    <property type="entry name" value="Uncharacterised_TM-17"/>
</dbReference>
<dbReference type="PANTHER" id="PTHR13531">
    <property type="entry name" value="GEO07735P1-RELATED-RELATED"/>
    <property type="match status" value="1"/>
</dbReference>
<dbReference type="PANTHER" id="PTHR13531:SF8">
    <property type="entry name" value="TRANSMEMBRANE PROTEIN 80"/>
    <property type="match status" value="1"/>
</dbReference>
<dbReference type="Pfam" id="PF09799">
    <property type="entry name" value="Transmemb_17"/>
    <property type="match status" value="1"/>
</dbReference>
<accession>Q9D3H0</accession>
<accession>Q8BQL4</accession>
<evidence type="ECO:0000255" key="1"/>
<evidence type="ECO:0000269" key="2">
    <source>
    </source>
</evidence>
<evidence type="ECO:0000303" key="3">
    <source>
    </source>
</evidence>
<evidence type="ECO:0000305" key="4"/>
<proteinExistence type="evidence at transcript level"/>
<sequence length="123" mass="13473">MLFHLSGLYSALYFLATLLMIVYKSQVFSYPCNCLALDLVLLLLMGILKVAQLYLGTKGNLMEAEVPLAASLAFTAVGGLLSVHFLLWQTLVLWMDSVLSTVLLVLHGLEAGLQVVVIADFIR</sequence>